<gene>
    <name evidence="1" type="primary">trmD</name>
    <name type="ordered locus">COPRO5265_0702</name>
</gene>
<comment type="function">
    <text evidence="1">Specifically methylates guanosine-37 in various tRNAs.</text>
</comment>
<comment type="catalytic activity">
    <reaction evidence="1">
        <text>guanosine(37) in tRNA + S-adenosyl-L-methionine = N(1)-methylguanosine(37) in tRNA + S-adenosyl-L-homocysteine + H(+)</text>
        <dbReference type="Rhea" id="RHEA:36899"/>
        <dbReference type="Rhea" id="RHEA-COMP:10145"/>
        <dbReference type="Rhea" id="RHEA-COMP:10147"/>
        <dbReference type="ChEBI" id="CHEBI:15378"/>
        <dbReference type="ChEBI" id="CHEBI:57856"/>
        <dbReference type="ChEBI" id="CHEBI:59789"/>
        <dbReference type="ChEBI" id="CHEBI:73542"/>
        <dbReference type="ChEBI" id="CHEBI:74269"/>
        <dbReference type="EC" id="2.1.1.228"/>
    </reaction>
</comment>
<comment type="subunit">
    <text evidence="1">Homodimer.</text>
</comment>
<comment type="subcellular location">
    <subcellularLocation>
        <location evidence="1">Cytoplasm</location>
    </subcellularLocation>
</comment>
<comment type="similarity">
    <text evidence="1">Belongs to the RNA methyltransferase TrmD family.</text>
</comment>
<protein>
    <recommendedName>
        <fullName evidence="1">tRNA (guanine-N(1)-)-methyltransferase</fullName>
        <ecNumber evidence="1">2.1.1.228</ecNumber>
    </recommendedName>
    <alternativeName>
        <fullName evidence="1">M1G-methyltransferase</fullName>
    </alternativeName>
    <alternativeName>
        <fullName evidence="1">tRNA [GM37] methyltransferase</fullName>
    </alternativeName>
</protein>
<evidence type="ECO:0000255" key="1">
    <source>
        <dbReference type="HAMAP-Rule" id="MF_00605"/>
    </source>
</evidence>
<proteinExistence type="inferred from homology"/>
<accession>B5Y8F3</accession>
<reference key="1">
    <citation type="submission" date="2008-08" db="EMBL/GenBank/DDBJ databases">
        <title>The complete genome sequence of Coprothermobacter proteolyticus strain ATCC 5245 / DSM 5265 / BT.</title>
        <authorList>
            <person name="Dodson R.J."/>
            <person name="Durkin A.S."/>
            <person name="Wu M."/>
            <person name="Eisen J."/>
            <person name="Sutton G."/>
        </authorList>
    </citation>
    <scope>NUCLEOTIDE SEQUENCE [LARGE SCALE GENOMIC DNA]</scope>
    <source>
        <strain>ATCC 35245 / DSM 5265 / OCM 4 / BT</strain>
    </source>
</reference>
<sequence>MKRFAVVTLFPDAIDCWLQASVVGRARGRAFDVLYVNPRDFAKDRYRSVDDYMFGGGPGMLMRYDVLKPALDHAKILVQNPLVLALSAGGKVLNQEMCTILSSYEGDIVLLCGHYEGMDDRIFDHVDLEVSVGDYVLSGGELGAAVIMETVIRLLPGFVEKSDNVRKESFTNNLLEEPQFTRPREYEGKEVPEVLLSGHHQRIELWKKEQRIKRTLVQRPDLLTSAKLEPMDLQILRRVLTDMEKVKRAIFGEQSN</sequence>
<name>TRMD_COPPD</name>
<dbReference type="EC" id="2.1.1.228" evidence="1"/>
<dbReference type="EMBL" id="CP001145">
    <property type="protein sequence ID" value="ACI17784.1"/>
    <property type="molecule type" value="Genomic_DNA"/>
</dbReference>
<dbReference type="RefSeq" id="WP_012544436.1">
    <property type="nucleotide sequence ID" value="NC_011295.1"/>
</dbReference>
<dbReference type="SMR" id="B5Y8F3"/>
<dbReference type="STRING" id="309798.COPRO5265_0702"/>
<dbReference type="KEGG" id="cpo:COPRO5265_0702"/>
<dbReference type="eggNOG" id="COG0336">
    <property type="taxonomic scope" value="Bacteria"/>
</dbReference>
<dbReference type="HOGENOM" id="CLU_047363_0_1_9"/>
<dbReference type="OrthoDB" id="9807416at2"/>
<dbReference type="Proteomes" id="UP000001732">
    <property type="component" value="Chromosome"/>
</dbReference>
<dbReference type="GO" id="GO:0005829">
    <property type="term" value="C:cytosol"/>
    <property type="evidence" value="ECO:0007669"/>
    <property type="project" value="TreeGrafter"/>
</dbReference>
<dbReference type="GO" id="GO:0052906">
    <property type="term" value="F:tRNA (guanine(37)-N1)-methyltransferase activity"/>
    <property type="evidence" value="ECO:0007669"/>
    <property type="project" value="UniProtKB-UniRule"/>
</dbReference>
<dbReference type="GO" id="GO:0002939">
    <property type="term" value="P:tRNA N1-guanine methylation"/>
    <property type="evidence" value="ECO:0007669"/>
    <property type="project" value="TreeGrafter"/>
</dbReference>
<dbReference type="CDD" id="cd18080">
    <property type="entry name" value="TrmD-like"/>
    <property type="match status" value="1"/>
</dbReference>
<dbReference type="Gene3D" id="3.40.1280.10">
    <property type="match status" value="1"/>
</dbReference>
<dbReference type="Gene3D" id="1.10.1270.20">
    <property type="entry name" value="tRNA(m1g37)methyltransferase, domain 2"/>
    <property type="match status" value="1"/>
</dbReference>
<dbReference type="HAMAP" id="MF_00605">
    <property type="entry name" value="TrmD"/>
    <property type="match status" value="1"/>
</dbReference>
<dbReference type="InterPro" id="IPR029028">
    <property type="entry name" value="Alpha/beta_knot_MTases"/>
</dbReference>
<dbReference type="InterPro" id="IPR023148">
    <property type="entry name" value="tRNA_m1G_MeTrfase_C_sf"/>
</dbReference>
<dbReference type="InterPro" id="IPR002649">
    <property type="entry name" value="tRNA_m1G_MeTrfase_TrmD"/>
</dbReference>
<dbReference type="InterPro" id="IPR029026">
    <property type="entry name" value="tRNA_m1G_MTases_N"/>
</dbReference>
<dbReference type="InterPro" id="IPR016009">
    <property type="entry name" value="tRNA_MeTrfase_TRMD/TRM10"/>
</dbReference>
<dbReference type="NCBIfam" id="NF000648">
    <property type="entry name" value="PRK00026.1"/>
    <property type="match status" value="1"/>
</dbReference>
<dbReference type="NCBIfam" id="TIGR00088">
    <property type="entry name" value="trmD"/>
    <property type="match status" value="1"/>
</dbReference>
<dbReference type="PANTHER" id="PTHR46417">
    <property type="entry name" value="TRNA (GUANINE-N(1)-)-METHYLTRANSFERASE"/>
    <property type="match status" value="1"/>
</dbReference>
<dbReference type="PANTHER" id="PTHR46417:SF1">
    <property type="entry name" value="TRNA (GUANINE-N(1)-)-METHYLTRANSFERASE"/>
    <property type="match status" value="1"/>
</dbReference>
<dbReference type="Pfam" id="PF01746">
    <property type="entry name" value="tRNA_m1G_MT"/>
    <property type="match status" value="1"/>
</dbReference>
<dbReference type="PIRSF" id="PIRSF000386">
    <property type="entry name" value="tRNA_mtase"/>
    <property type="match status" value="1"/>
</dbReference>
<dbReference type="SUPFAM" id="SSF75217">
    <property type="entry name" value="alpha/beta knot"/>
    <property type="match status" value="1"/>
</dbReference>
<keyword id="KW-0963">Cytoplasm</keyword>
<keyword id="KW-0489">Methyltransferase</keyword>
<keyword id="KW-1185">Reference proteome</keyword>
<keyword id="KW-0949">S-adenosyl-L-methionine</keyword>
<keyword id="KW-0808">Transferase</keyword>
<keyword id="KW-0819">tRNA processing</keyword>
<organism>
    <name type="scientific">Coprothermobacter proteolyticus (strain ATCC 35245 / DSM 5265 / OCM 4 / BT)</name>
    <dbReference type="NCBI Taxonomy" id="309798"/>
    <lineage>
        <taxon>Bacteria</taxon>
        <taxon>Pseudomonadati</taxon>
        <taxon>Coprothermobacterota</taxon>
        <taxon>Coprothermobacteria</taxon>
        <taxon>Coprothermobacterales</taxon>
        <taxon>Coprothermobacteraceae</taxon>
        <taxon>Coprothermobacter</taxon>
    </lineage>
</organism>
<feature type="chain" id="PRO_1000130154" description="tRNA (guanine-N(1)-)-methyltransferase">
    <location>
        <begin position="1"/>
        <end position="256"/>
    </location>
</feature>
<feature type="binding site" evidence="1">
    <location>
        <position position="113"/>
    </location>
    <ligand>
        <name>S-adenosyl-L-methionine</name>
        <dbReference type="ChEBI" id="CHEBI:59789"/>
    </ligand>
</feature>
<feature type="binding site" evidence="1">
    <location>
        <begin position="132"/>
        <end position="137"/>
    </location>
    <ligand>
        <name>S-adenosyl-L-methionine</name>
        <dbReference type="ChEBI" id="CHEBI:59789"/>
    </ligand>
</feature>